<dbReference type="EMBL" id="AF195610">
    <property type="protein sequence ID" value="AAF15529.1"/>
    <property type="molecule type" value="mRNA"/>
</dbReference>
<dbReference type="EMBL" id="AF195611">
    <property type="protein sequence ID" value="AAF15530.1"/>
    <property type="molecule type" value="mRNA"/>
</dbReference>
<dbReference type="EMBL" id="BX284601">
    <property type="protein sequence ID" value="CAC42255.1"/>
    <property type="molecule type" value="Genomic_DNA"/>
</dbReference>
<dbReference type="EMBL" id="BX284601">
    <property type="protein sequence ID" value="CAC42254.1"/>
    <property type="molecule type" value="Genomic_DNA"/>
</dbReference>
<dbReference type="RefSeq" id="NP_001020998.1">
    <molecule id="Q9U489-1"/>
    <property type="nucleotide sequence ID" value="NM_001025827.6"/>
</dbReference>
<dbReference type="RefSeq" id="NP_001020999.1">
    <molecule id="Q9U489-2"/>
    <property type="nucleotide sequence ID" value="NM_001025828.7"/>
</dbReference>
<dbReference type="PDB" id="4UMG">
    <property type="method" value="X-ray"/>
    <property type="resolution" value="1.68 A"/>
    <property type="chains" value="A=691-821"/>
</dbReference>
<dbReference type="PDBsum" id="4UMG"/>
<dbReference type="SMR" id="Q9U489"/>
<dbReference type="BioGRID" id="38191">
    <property type="interactions" value="104"/>
</dbReference>
<dbReference type="FunCoup" id="Q9U489">
    <property type="interactions" value="2"/>
</dbReference>
<dbReference type="IntAct" id="Q9U489">
    <property type="interactions" value="13"/>
</dbReference>
<dbReference type="STRING" id="6239.C12C8.3a.1"/>
<dbReference type="PaxDb" id="6239-C12C8.3a.1"/>
<dbReference type="PeptideAtlas" id="Q9U489"/>
<dbReference type="EnsemblMetazoa" id="C12C8.3a.1">
    <molecule id="Q9U489-1"/>
    <property type="protein sequence ID" value="C12C8.3a.1"/>
    <property type="gene ID" value="WBGene00003026"/>
</dbReference>
<dbReference type="EnsemblMetazoa" id="C12C8.3a.2">
    <molecule id="Q9U489-1"/>
    <property type="protein sequence ID" value="C12C8.3a.2"/>
    <property type="gene ID" value="WBGene00003026"/>
</dbReference>
<dbReference type="EnsemblMetazoa" id="C12C8.3b.1">
    <molecule id="Q9U489-2"/>
    <property type="protein sequence ID" value="C12C8.3b.1"/>
    <property type="gene ID" value="WBGene00003026"/>
</dbReference>
<dbReference type="EnsemblMetazoa" id="C12C8.3b.2">
    <molecule id="Q9U489-2"/>
    <property type="protein sequence ID" value="C12C8.3b.2"/>
    <property type="gene ID" value="WBGene00003026"/>
</dbReference>
<dbReference type="GeneID" id="172760"/>
<dbReference type="KEGG" id="cel:CELE_C12C8.3"/>
<dbReference type="UCSC" id="C12C8.3b">
    <molecule id="Q9U489-1"/>
    <property type="organism name" value="c. elegans"/>
</dbReference>
<dbReference type="AGR" id="WB:WBGene00003026"/>
<dbReference type="CTD" id="172760"/>
<dbReference type="WormBase" id="C12C8.3a">
    <molecule id="Q9U489-2"/>
    <property type="protein sequence ID" value="CE27062"/>
    <property type="gene ID" value="WBGene00003026"/>
    <property type="gene designation" value="lin-41"/>
</dbReference>
<dbReference type="WormBase" id="C12C8.3b">
    <molecule id="Q9U489-1"/>
    <property type="protein sequence ID" value="CE27063"/>
    <property type="gene ID" value="WBGene00003026"/>
    <property type="gene designation" value="lin-41"/>
</dbReference>
<dbReference type="eggNOG" id="KOG2177">
    <property type="taxonomic scope" value="Eukaryota"/>
</dbReference>
<dbReference type="GeneTree" id="ENSGT00980000198821"/>
<dbReference type="InParanoid" id="Q9U489"/>
<dbReference type="OMA" id="ESGPCAK"/>
<dbReference type="OrthoDB" id="342730at2759"/>
<dbReference type="PhylomeDB" id="Q9U489"/>
<dbReference type="Reactome" id="R-CEL-6798695">
    <property type="pathway name" value="Neutrophil degranulation"/>
</dbReference>
<dbReference type="EvolutionaryTrace" id="Q9U489"/>
<dbReference type="PRO" id="PR:Q9U489"/>
<dbReference type="Proteomes" id="UP000001940">
    <property type="component" value="Chromosome I"/>
</dbReference>
<dbReference type="Bgee" id="WBGene00003026">
    <property type="expression patterns" value="Expressed in larva and 3 other cell types or tissues"/>
</dbReference>
<dbReference type="GO" id="GO:0005737">
    <property type="term" value="C:cytoplasm"/>
    <property type="evidence" value="ECO:0000314"/>
    <property type="project" value="UniProtKB"/>
</dbReference>
<dbReference type="GO" id="GO:0000932">
    <property type="term" value="C:P-body"/>
    <property type="evidence" value="ECO:0007669"/>
    <property type="project" value="UniProtKB-SubCell"/>
</dbReference>
<dbReference type="GO" id="GO:0035770">
    <property type="term" value="C:ribonucleoprotein granule"/>
    <property type="evidence" value="ECO:0000314"/>
    <property type="project" value="WormBase"/>
</dbReference>
<dbReference type="GO" id="GO:0035198">
    <property type="term" value="F:miRNA binding"/>
    <property type="evidence" value="ECO:0000250"/>
    <property type="project" value="UniProtKB"/>
</dbReference>
<dbReference type="GO" id="GO:0003729">
    <property type="term" value="F:mRNA binding"/>
    <property type="evidence" value="ECO:0000314"/>
    <property type="project" value="UniProtKB"/>
</dbReference>
<dbReference type="GO" id="GO:0003723">
    <property type="term" value="F:RNA binding"/>
    <property type="evidence" value="ECO:0000315"/>
    <property type="project" value="UniProtKB"/>
</dbReference>
<dbReference type="GO" id="GO:0030371">
    <property type="term" value="F:translation repressor activity"/>
    <property type="evidence" value="ECO:0000315"/>
    <property type="project" value="UniProtKB"/>
</dbReference>
<dbReference type="GO" id="GO:0004842">
    <property type="term" value="F:ubiquitin-protein transferase activity"/>
    <property type="evidence" value="ECO:0000250"/>
    <property type="project" value="WormBase"/>
</dbReference>
<dbReference type="GO" id="GO:0008270">
    <property type="term" value="F:zinc ion binding"/>
    <property type="evidence" value="ECO:0007669"/>
    <property type="project" value="UniProtKB-KW"/>
</dbReference>
<dbReference type="GO" id="GO:0009957">
    <property type="term" value="P:epidermal cell fate specification"/>
    <property type="evidence" value="ECO:0000315"/>
    <property type="project" value="UniProtKB"/>
</dbReference>
<dbReference type="GO" id="GO:0007276">
    <property type="term" value="P:gamete generation"/>
    <property type="evidence" value="ECO:0000315"/>
    <property type="project" value="WormBase"/>
</dbReference>
<dbReference type="GO" id="GO:0006402">
    <property type="term" value="P:mRNA catabolic process"/>
    <property type="evidence" value="ECO:0000315"/>
    <property type="project" value="UniProtKB"/>
</dbReference>
<dbReference type="GO" id="GO:0010629">
    <property type="term" value="P:negative regulation of gene expression"/>
    <property type="evidence" value="ECO:0000315"/>
    <property type="project" value="UniProtKB"/>
</dbReference>
<dbReference type="GO" id="GO:0017148">
    <property type="term" value="P:negative regulation of translation"/>
    <property type="evidence" value="ECO:0000315"/>
    <property type="project" value="UniProtKB"/>
</dbReference>
<dbReference type="GO" id="GO:0045138">
    <property type="term" value="P:nematode male tail tip morphogenesis"/>
    <property type="evidence" value="ECO:0000315"/>
    <property type="project" value="UniProtKB"/>
</dbReference>
<dbReference type="GO" id="GO:0090727">
    <property type="term" value="P:positive regulation of brood size"/>
    <property type="evidence" value="ECO:0000315"/>
    <property type="project" value="UniProtKB"/>
</dbReference>
<dbReference type="GO" id="GO:0060282">
    <property type="term" value="P:positive regulation of oocyte development"/>
    <property type="evidence" value="ECO:0000315"/>
    <property type="project" value="UniProtKB"/>
</dbReference>
<dbReference type="GO" id="GO:0045944">
    <property type="term" value="P:positive regulation of transcription by RNA polymerase II"/>
    <property type="evidence" value="ECO:0000315"/>
    <property type="project" value="WormBase"/>
</dbReference>
<dbReference type="GO" id="GO:0019538">
    <property type="term" value="P:protein metabolic process"/>
    <property type="evidence" value="ECO:0000315"/>
    <property type="project" value="WormBase"/>
</dbReference>
<dbReference type="GO" id="GO:0040034">
    <property type="term" value="P:regulation of development, heterochronic"/>
    <property type="evidence" value="ECO:0000315"/>
    <property type="project" value="WormBase"/>
</dbReference>
<dbReference type="GO" id="GO:0045604">
    <property type="term" value="P:regulation of epidermal cell differentiation"/>
    <property type="evidence" value="ECO:0000315"/>
    <property type="project" value="WormBase"/>
</dbReference>
<dbReference type="GO" id="GO:0110037">
    <property type="term" value="P:regulation of nematode male tail tip morphogenesis"/>
    <property type="evidence" value="ECO:0000315"/>
    <property type="project" value="UniProtKB"/>
</dbReference>
<dbReference type="CDD" id="cd14954">
    <property type="entry name" value="NHL_TRIM71_like"/>
    <property type="match status" value="1"/>
</dbReference>
<dbReference type="DisProt" id="DP02990"/>
<dbReference type="FunFam" id="2.120.10.30:FF:000129">
    <property type="entry name" value="CRE-LIN-41 protein"/>
    <property type="match status" value="1"/>
</dbReference>
<dbReference type="FunFam" id="2.120.10.30:FF:000080">
    <property type="entry name" value="E3 ubiquitin-protein ligase TRIM71"/>
    <property type="match status" value="1"/>
</dbReference>
<dbReference type="FunFam" id="2.60.40.10:FF:002960">
    <property type="entry name" value="Protein lin-41"/>
    <property type="match status" value="1"/>
</dbReference>
<dbReference type="Gene3D" id="2.40.10.500">
    <property type="match status" value="1"/>
</dbReference>
<dbReference type="Gene3D" id="3.30.160.60">
    <property type="entry name" value="Classic Zinc Finger"/>
    <property type="match status" value="1"/>
</dbReference>
<dbReference type="Gene3D" id="2.60.40.10">
    <property type="entry name" value="Immunoglobulins"/>
    <property type="match status" value="1"/>
</dbReference>
<dbReference type="Gene3D" id="2.120.10.30">
    <property type="entry name" value="TolB, C-terminal domain"/>
    <property type="match status" value="2"/>
</dbReference>
<dbReference type="InterPro" id="IPR011042">
    <property type="entry name" value="6-blade_b-propeller_TolB-like"/>
</dbReference>
<dbReference type="InterPro" id="IPR003649">
    <property type="entry name" value="Bbox_C"/>
</dbReference>
<dbReference type="InterPro" id="IPR017868">
    <property type="entry name" value="Filamin/ABP280_repeat-like"/>
</dbReference>
<dbReference type="InterPro" id="IPR001298">
    <property type="entry name" value="Filamin/ABP280_rpt"/>
</dbReference>
<dbReference type="InterPro" id="IPR013783">
    <property type="entry name" value="Ig-like_fold"/>
</dbReference>
<dbReference type="InterPro" id="IPR014756">
    <property type="entry name" value="Ig_E-set"/>
</dbReference>
<dbReference type="InterPro" id="IPR001258">
    <property type="entry name" value="NHL_repeat"/>
</dbReference>
<dbReference type="InterPro" id="IPR050952">
    <property type="entry name" value="TRIM-NHL_E3_ligases"/>
</dbReference>
<dbReference type="InterPro" id="IPR000315">
    <property type="entry name" value="Znf_B-box"/>
</dbReference>
<dbReference type="PANTHER" id="PTHR24104">
    <property type="entry name" value="E3 UBIQUITIN-PROTEIN LIGASE NHLRC1-RELATED"/>
    <property type="match status" value="1"/>
</dbReference>
<dbReference type="PANTHER" id="PTHR24104:SF25">
    <property type="entry name" value="PROTEIN LIN-41"/>
    <property type="match status" value="1"/>
</dbReference>
<dbReference type="Pfam" id="PF00630">
    <property type="entry name" value="Filamin"/>
    <property type="match status" value="1"/>
</dbReference>
<dbReference type="Pfam" id="PF01436">
    <property type="entry name" value="NHL"/>
    <property type="match status" value="6"/>
</dbReference>
<dbReference type="SMART" id="SM00502">
    <property type="entry name" value="BBC"/>
    <property type="match status" value="1"/>
</dbReference>
<dbReference type="SMART" id="SM00336">
    <property type="entry name" value="BBOX"/>
    <property type="match status" value="2"/>
</dbReference>
<dbReference type="SMART" id="SM00557">
    <property type="entry name" value="IG_FLMN"/>
    <property type="match status" value="1"/>
</dbReference>
<dbReference type="SUPFAM" id="SSF81296">
    <property type="entry name" value="E set domains"/>
    <property type="match status" value="1"/>
</dbReference>
<dbReference type="SUPFAM" id="SSF101898">
    <property type="entry name" value="NHL repeat"/>
    <property type="match status" value="1"/>
</dbReference>
<dbReference type="PROSITE" id="PS50194">
    <property type="entry name" value="FILAMIN_REPEAT"/>
    <property type="match status" value="1"/>
</dbReference>
<dbReference type="PROSITE" id="PS51125">
    <property type="entry name" value="NHL"/>
    <property type="match status" value="6"/>
</dbReference>
<dbReference type="PROSITE" id="PS50119">
    <property type="entry name" value="ZF_BBOX"/>
    <property type="match status" value="1"/>
</dbReference>
<gene>
    <name evidence="17" type="primary">lin-41</name>
    <name evidence="17" type="ORF">C12C8.3</name>
</gene>
<reference key="1">
    <citation type="journal article" date="2000" name="Mol. Cell">
        <title>The lin-41 RBCC gene acts in the C. elegans heterochronic pathway between the let-7 regulatory RNA and the LIN-29 transcription factor.</title>
        <authorList>
            <person name="Slack F.J."/>
            <person name="Basson M."/>
            <person name="Liu Z."/>
            <person name="Ambros V."/>
            <person name="Horvitz H.R."/>
            <person name="Ruvkun G."/>
        </authorList>
    </citation>
    <scope>NUCLEOTIDE SEQUENCE [MRNA] (ISOFORMS A AND B)</scope>
    <scope>FUNCTION</scope>
    <scope>SUBCELLULAR LOCATION</scope>
    <scope>DEVELOPMENTAL STAGE</scope>
    <scope>DOWN-REGULATION BY LET-7</scope>
</reference>
<reference key="2">
    <citation type="journal article" date="1998" name="Science">
        <title>Genome sequence of the nematode C. elegans: a platform for investigating biology.</title>
        <authorList>
            <consortium name="The C. elegans sequencing consortium"/>
        </authorList>
    </citation>
    <scope>NUCLEOTIDE SEQUENCE [LARGE SCALE GENOMIC DNA]</scope>
    <source>
        <strain>Bristol N2</strain>
    </source>
</reference>
<reference key="3">
    <citation type="journal article" date="2005" name="Cell">
        <title>Regulation by let-7 and lin-4 miRNAs results in target mRNA degradation.</title>
        <authorList>
            <person name="Bagga S."/>
            <person name="Bracht J."/>
            <person name="Hunter S."/>
            <person name="Massirer K."/>
            <person name="Holtz J."/>
            <person name="Eachus R."/>
            <person name="Pasquinelli A.E."/>
        </authorList>
    </citation>
    <scope>DEVELOPMENTAL STAGE</scope>
    <scope>DOWN-REGULATION BY LET-7</scope>
</reference>
<reference key="4">
    <citation type="journal article" date="2006" name="Dev. Biol.">
        <title>Novel gain-of-function alleles demonstrate a role for the heterochronic gene lin-41 in C. elegans male tail tip morphogenesis.</title>
        <authorList>
            <person name="Del Rio-Albrechtsen T."/>
            <person name="Kiontke K."/>
            <person name="Chiou S.-Y."/>
            <person name="Fitch D.H.A."/>
        </authorList>
    </citation>
    <scope>FUNCTION</scope>
    <scope>MUTAGENESIS OF 1-MET--SER-38 AND GLY-34</scope>
</reference>
<reference key="5">
    <citation type="journal article" date="2008" name="Development">
        <title>dmd-3, a doublesex-related gene regulated by tra-1, governs sex-specific morphogenesis in C. elegans.</title>
        <authorList>
            <person name="Mason D.A."/>
            <person name="Rabinowitz J.S."/>
            <person name="Portman D.S."/>
        </authorList>
    </citation>
    <scope>FUNCTION</scope>
</reference>
<reference key="6">
    <citation type="journal article" date="2016" name="Development">
        <title>Makorin ortholog LEP-2 regulates LIN-28 stability to promote the juvenile-to-adult transition in Caenorhabditis elegans.</title>
        <authorList>
            <person name="Herrera R.A."/>
            <person name="Kiontke K."/>
            <person name="Fitch D.H."/>
        </authorList>
    </citation>
    <scope>FUNCTION</scope>
    <scope>DISRUPTION PHENOTYPE</scope>
</reference>
<reference key="7">
    <citation type="journal article" date="2017" name="Cell Cycle">
        <title>acn-1, a C. elegans homologue of ACE, genetically interacts with the let-7 microRNA and other heterochronic genes.</title>
        <authorList>
            <person name="Metheetrairut C."/>
            <person name="Ahuja Y."/>
            <person name="Slack F.J."/>
        </authorList>
    </citation>
    <scope>FUNCTION</scope>
</reference>
<reference key="8">
    <citation type="journal article" date="2017" name="Mol. Cell">
        <title>When LIN41 comes to a fork in the road, it takes BOTH paths: translational repression OR mRNA decay, depending on the target site position.</title>
        <authorList>
            <person name="Hand J.M."/>
            <person name="Bazzini A.A."/>
        </authorList>
    </citation>
    <scope>COMMENT ON FUNCTION</scope>
</reference>
<reference key="9">
    <citation type="journal article" date="2017" name="Mol. Cell">
        <title>LIN41 post-transcriptionally silences mRNAs by two distinct and position-dependent mechanisms.</title>
        <authorList>
            <person name="Aeschimann F."/>
            <person name="Kumari P."/>
            <person name="Bartake H."/>
            <person name="Gaidatzis D."/>
            <person name="Xu L."/>
            <person name="Ciosk R."/>
            <person name="Grosshans H."/>
        </authorList>
    </citation>
    <scope>FUNCTION</scope>
    <scope>RNA-BINDING</scope>
</reference>
<reference key="10">
    <citation type="journal article" date="2019" name="Dev. Cell">
        <title>The Long Non-Coding RNA lep-5 Promotes the Juvenile-to-Adult Transition by Destabilizing LIN-28.</title>
        <authorList>
            <person name="Kiontke K.C."/>
            <person name="Herrera R.A."/>
            <person name="Vuong E."/>
            <person name="Luo J."/>
            <person name="Schwarz E.M."/>
            <person name="Fitch D.H.A."/>
            <person name="Portman D.S."/>
        </authorList>
    </citation>
    <scope>FUNCTION</scope>
    <scope>DISRUPTION PHENOTYPE</scope>
</reference>
<reference key="11">
    <citation type="journal article" date="2019" name="Elife">
        <title>The Makorin lep-2 and the lncRNA lep-5 regulate lin-28 to schedule sexual maturation of the C. elegans nervous system.</title>
        <authorList>
            <person name="Lawson H."/>
            <person name="Vuong E."/>
            <person name="Miller R.M."/>
            <person name="Kiontke K."/>
            <person name="Fitch D.H."/>
            <person name="Portman D.S."/>
        </authorList>
    </citation>
    <scope>FUNCTION</scope>
    <scope>MUTAGENESIS OF 1-MET--SER-38</scope>
</reference>
<reference key="12">
    <citation type="journal article" date="2019" name="Life. Sci Alliance">
        <title>let-7 coordinates the transition to adulthood through a single primary and four secondary targets.</title>
        <authorList>
            <person name="Aeschimann F."/>
            <person name="Neagu A."/>
            <person name="Rausch M."/>
            <person name="Grosshans H."/>
        </authorList>
    </citation>
    <scope>FUNCTION</scope>
    <scope>DISRUPTION PHENOTYPE</scope>
    <scope>MUTAGENESIS OF 1-MET--SER-38 AND GLY-34</scope>
</reference>
<sequence length="1147" mass="124232">MATIVPCSLEKEEGAPSGPRRLQTEIDVDANDSGNELSMGGSSSEGDSMSHHRGEHSPNHHHQDNHLGSGPPPPQFTGSLFDTPPSMIQSPQQQPQFQFNTGFGLGLPQDSFRCSVCSKSSTIGVLPFVCAHKTCQSCYQMTPSSYDRRACKLCGAVSTATANFTSQMYLSPTLPSPPRGALMSDCSTPTMNNHINSSTPLHQPRAFSFSLSGMPGSPSPVMGARMPSSAGGLMMRPIGFPDSDSSLTSWSPLQQPSQLSINNLSSIGGHQQQSPMLMQNVFDSLAVNDDTPVFSPLSPTNTSMHMPPSLMASPDVPKHSATIAPPRNSMCSTPRLQLATPMSSQSQQTFPIPSPLGSQPQQQQPMGPIQCQGCESKISFAYCMQCQEALCIHCVQAHQRVRATKQHAFVELQQLMATLMSRAVQPQQAQQYTQNVGGSVRQALGSVGSGDVFFSGHVSGVENDSIGSGESSPRSSSVCGTHDSVIIGICENCPHSVLLCAICVAQHPGKHRVQPLGDIRVAVGEVVNESQLLQWQCEKTGDTIKQIIDGIVTNATTAENEIRAAFDTHVNALEERRKELLKRVETVKNLKLSVLISQAESLQSKQIDLQQAIQTATKLMDSSDCDEMVLRQVFEKLASCQMGNEGTEPNNNILNVLMLACQVNEDDRLKFTAPQDGILLNKARQFGNIESGPCAKNSSIVGDSFKKAIRERQTVIYVQLRDACGDLLSSSIAATQPTSQALLPHQEPHSHLEQAMPTSDVQAFVISPDGSTVEVTMTPRENGIVALSYYPSIEGSYTLNILVKGTPISGCPTTMDIRRGRNYDEIAAKGPILTFGKEGSGDGELCRPWGICVDQRGRVIVADRSNNRVQIFDKDGNFISKFGTSGNRPGQFDRPAGITTNSLNNIVVADKDNHRVQVFDENGMFLLKFGDRGRAVGYFNYPWGVATNSHNAIAVSDTRNHRVQIFTPQGQFVRKCGFDSAYFFKNLDSPRGLCYLPDGQLLITDFNNHRLAVLSPRNMSEMKVYGSEGDGDGMFVRPQGVVIDPEGHILVCDSRNNRVQVFASDDMRFIGSFGLGPVPNSGFQMPQELPAPYSSLGGPFGAPAFSSAPTPLTPSPRQLLDRPTDLAVGPDGRIYVVDFGNNCIRVF</sequence>
<feature type="chain" id="PRO_0000279514" description="Protein lin-41">
    <location>
        <begin position="1"/>
        <end position="1147"/>
    </location>
</feature>
<feature type="repeat" description="Filamin">
    <location>
        <begin position="723"/>
        <end position="817"/>
    </location>
</feature>
<feature type="repeat" description="NHL 1">
    <location>
        <begin position="832"/>
        <end position="875"/>
    </location>
</feature>
<feature type="repeat" description="NHL 2">
    <location>
        <begin position="879"/>
        <end position="922"/>
    </location>
</feature>
<feature type="repeat" description="NHL 3">
    <location>
        <begin position="926"/>
        <end position="969"/>
    </location>
</feature>
<feature type="repeat" description="NHL 4">
    <location>
        <begin position="974"/>
        <end position="1017"/>
    </location>
</feature>
<feature type="repeat" description="NHL 5">
    <location>
        <begin position="1022"/>
        <end position="1065"/>
    </location>
</feature>
<feature type="repeat" description="NHL 6">
    <location>
        <begin position="1107"/>
        <end position="1147"/>
    </location>
</feature>
<feature type="zinc finger region" description="RING-type">
    <location>
        <begin position="114"/>
        <end position="155"/>
    </location>
</feature>
<feature type="zinc finger region" description="B box-type; atypical" evidence="3">
    <location>
        <begin position="366"/>
        <end position="412"/>
    </location>
</feature>
<feature type="region of interest" description="Disordered" evidence="4">
    <location>
        <begin position="1"/>
        <end position="93"/>
    </location>
</feature>
<feature type="region of interest" description="Disordered" evidence="4">
    <location>
        <begin position="1104"/>
        <end position="1123"/>
    </location>
</feature>
<feature type="coiled-coil region" evidence="2">
    <location>
        <begin position="565"/>
        <end position="618"/>
    </location>
</feature>
<feature type="compositionally biased region" description="Low complexity" evidence="4">
    <location>
        <begin position="33"/>
        <end position="47"/>
    </location>
</feature>
<feature type="compositionally biased region" description="Basic and acidic residues" evidence="4">
    <location>
        <begin position="48"/>
        <end position="65"/>
    </location>
</feature>
<feature type="compositionally biased region" description="Low complexity" evidence="4">
    <location>
        <begin position="84"/>
        <end position="93"/>
    </location>
</feature>
<feature type="binding site" evidence="3">
    <location>
        <position position="371"/>
    </location>
    <ligand>
        <name>Zn(2+)</name>
        <dbReference type="ChEBI" id="CHEBI:29105"/>
    </ligand>
</feature>
<feature type="binding site" evidence="3">
    <location>
        <position position="374"/>
    </location>
    <ligand>
        <name>Zn(2+)</name>
        <dbReference type="ChEBI" id="CHEBI:29105"/>
    </ligand>
</feature>
<feature type="binding site" evidence="3">
    <location>
        <position position="394"/>
    </location>
    <ligand>
        <name>Zn(2+)</name>
        <dbReference type="ChEBI" id="CHEBI:29105"/>
    </ligand>
</feature>
<feature type="binding site" evidence="3">
    <location>
        <position position="398"/>
    </location>
    <ligand>
        <name>Zn(2+)</name>
        <dbReference type="ChEBI" id="CHEBI:29105"/>
    </ligand>
</feature>
<feature type="splice variant" id="VSP_023468" description="In isoform b." evidence="16">
    <location>
        <begin position="452"/>
        <end position="455"/>
    </location>
</feature>
<feature type="mutagenesis site" description="In bx42; disrupts tail tip morphogenesis resulting in retention of the pointed larval tail tip in 33% of adult males (also known as the Lep phenotype). Defective sexual maturation of AIM, CEM and AWA neurons in males." evidence="7 13 15">
    <location>
        <begin position="1"/>
        <end position="38"/>
    </location>
</feature>
<feature type="mutagenesis site" description="In bx37; disrupts tail tip morphogenesis resulting in retention of the pointed larval tail tip in 33% of adult males (also known as the Lep phenotype)." evidence="7 13">
    <original>G</original>
    <variation>R</variation>
    <location>
        <position position="34"/>
    </location>
</feature>
<feature type="helix" evidence="19">
    <location>
        <begin position="695"/>
        <end position="697"/>
    </location>
</feature>
<feature type="strand" evidence="19">
    <location>
        <begin position="699"/>
        <end position="703"/>
    </location>
</feature>
<feature type="helix" evidence="19">
    <location>
        <begin position="704"/>
        <end position="706"/>
    </location>
</feature>
<feature type="strand" evidence="19">
    <location>
        <begin position="707"/>
        <end position="709"/>
    </location>
</feature>
<feature type="strand" evidence="19">
    <location>
        <begin position="714"/>
        <end position="719"/>
    </location>
</feature>
<feature type="strand" evidence="19">
    <location>
        <begin position="761"/>
        <end position="766"/>
    </location>
</feature>
<feature type="strand" evidence="19">
    <location>
        <begin position="776"/>
        <end position="779"/>
    </location>
</feature>
<feature type="helix" evidence="19">
    <location>
        <begin position="781"/>
        <end position="783"/>
    </location>
</feature>
<feature type="strand" evidence="19">
    <location>
        <begin position="784"/>
        <end position="789"/>
    </location>
</feature>
<feature type="strand" evidence="19">
    <location>
        <begin position="795"/>
        <end position="803"/>
    </location>
</feature>
<feature type="strand" evidence="19">
    <location>
        <begin position="812"/>
        <end position="818"/>
    </location>
</feature>
<accession>Q9U489</accession>
<accession>Q9U490</accession>
<evidence type="ECO:0000250" key="1">
    <source>
        <dbReference type="UniProtKB" id="Q2Q1W2"/>
    </source>
</evidence>
<evidence type="ECO:0000255" key="2"/>
<evidence type="ECO:0000255" key="3">
    <source>
        <dbReference type="PROSITE-ProRule" id="PRU00024"/>
    </source>
</evidence>
<evidence type="ECO:0000256" key="4">
    <source>
        <dbReference type="SAM" id="MobiDB-lite"/>
    </source>
</evidence>
<evidence type="ECO:0000269" key="5">
    <source>
    </source>
</evidence>
<evidence type="ECO:0000269" key="6">
    <source>
    </source>
</evidence>
<evidence type="ECO:0000269" key="7">
    <source>
    </source>
</evidence>
<evidence type="ECO:0000269" key="8">
    <source>
    </source>
</evidence>
<evidence type="ECO:0000269" key="9">
    <source>
    </source>
</evidence>
<evidence type="ECO:0000269" key="10">
    <source>
    </source>
</evidence>
<evidence type="ECO:0000269" key="11">
    <source>
    </source>
</evidence>
<evidence type="ECO:0000269" key="12">
    <source>
    </source>
</evidence>
<evidence type="ECO:0000269" key="13">
    <source>
    </source>
</evidence>
<evidence type="ECO:0000269" key="14">
    <source>
    </source>
</evidence>
<evidence type="ECO:0000269" key="15">
    <source>
    </source>
</evidence>
<evidence type="ECO:0000305" key="16"/>
<evidence type="ECO:0000312" key="17">
    <source>
        <dbReference type="WormBase" id="C12C8.3a"/>
    </source>
</evidence>
<evidence type="ECO:0000312" key="18">
    <source>
        <dbReference type="WormBase" id="C12C8.3b"/>
    </source>
</evidence>
<evidence type="ECO:0007829" key="19">
    <source>
        <dbReference type="PDB" id="4UMG"/>
    </source>
</evidence>
<protein>
    <recommendedName>
        <fullName>Protein lin-41</fullName>
    </recommendedName>
    <alternativeName>
        <fullName>Abnormal cell lineage protein 41</fullName>
    </alternativeName>
</protein>
<proteinExistence type="evidence at protein level"/>
<keyword id="KW-0002">3D-structure</keyword>
<keyword id="KW-0025">Alternative splicing</keyword>
<keyword id="KW-0175">Coiled coil</keyword>
<keyword id="KW-0963">Cytoplasm</keyword>
<keyword id="KW-0217">Developmental protein</keyword>
<keyword id="KW-0479">Metal-binding</keyword>
<keyword id="KW-1185">Reference proteome</keyword>
<keyword id="KW-0677">Repeat</keyword>
<keyword id="KW-0694">RNA-binding</keyword>
<keyword id="KW-0862">Zinc</keyword>
<keyword id="KW-0863">Zinc-finger</keyword>
<comment type="function">
    <text evidence="5 7 8 9 10 11 12 13 14 15">Heterochronic protein which acts downstream of let-7 in temporal patterning (PubMed:10882102, PubMed:30910805). Plays a role in the developmental timing of postembryonic hypodermal seam cell division and fusion events and adult alae production (PubMed:28933985). Represses lin-29 during late larval stages, which prevents terminal differentiation of hypodermal seam cells and promotes their division (PubMed:10882102). Involved in post-transcriptional gene regulation, uses two independent pathways (PubMed:28157501). Has direct and specific RNA-binding activity and, depending on the location (5'UTR or 3'UTR) of the target site, triggers either mRNA decay or repression of translation (PubMed:28111013, PubMed:30910805). Degrades the mRNA of transcription factor dmd-3 to govern the timing and extent of male tail tip morphogenesis (PubMed:16806150, PubMed:18550714, PubMed:26811380, PubMed:28111013, PubMed:30910805, PubMed:30956008). Plays a role in the sexual maturation of the nervous system (PubMed:31264582).</text>
</comment>
<comment type="subcellular location">
    <subcellularLocation>
        <location evidence="5">Cytoplasm</location>
    </subcellularLocation>
    <subcellularLocation>
        <location evidence="1">Cytoplasm</location>
        <location evidence="1">P-body</location>
    </subcellularLocation>
</comment>
<comment type="alternative products">
    <event type="alternative splicing"/>
    <isoform>
        <id>Q9U489-1</id>
        <name evidence="17">a</name>
        <sequence type="displayed"/>
    </isoform>
    <isoform>
        <id>Q9U489-2</id>
        <name evidence="18">b</name>
        <sequence type="described" ref="VSP_023468"/>
    </isoform>
</comment>
<comment type="developmental stage">
    <text evidence="5 6">Expressed in body wall muscles, pharyngeal muscles and most neurons at all stages from late embryogenesis until adulthood. Expressed in hypodermal seam cells until the L4 stage.</text>
</comment>
<comment type="induction">
    <text evidence="5 6">Negatively regulated by the microRNA (miRNA) let-7 which causes degradation of the mRNA encoding this protein. This requires a let-7 complementary site (LCS) in the 3'-UTR of the mRNA encoding this protein.</text>
</comment>
<comment type="domain">
    <text evidence="1">The NHL domain, containing the 6 NHL repeats, is necessary and sufficient to target RNA but not to repress mRNA. The minimal region needed to execute repression consists of the coiled coil domain and the Filamin repeat. The RING-type domain is dispensable for mRNA repression.</text>
</comment>
<comment type="disruption phenotype">
    <text evidence="9 13 14">RNAi-mediated knockdown results in the precocious onset of tail tip retraction resulting in over-retracted and shortened adult male tails (also known as the Ore phenotype) (PubMed:26811380, PubMed:30956008). RNAi-mediated knockdown results in increased expression of dmd-3.</text>
</comment>
<comment type="similarity">
    <text evidence="16">Belongs to the TRIM/RBCC family.</text>
</comment>
<name>LIN41_CAEEL</name>
<organism>
    <name type="scientific">Caenorhabditis elegans</name>
    <dbReference type="NCBI Taxonomy" id="6239"/>
    <lineage>
        <taxon>Eukaryota</taxon>
        <taxon>Metazoa</taxon>
        <taxon>Ecdysozoa</taxon>
        <taxon>Nematoda</taxon>
        <taxon>Chromadorea</taxon>
        <taxon>Rhabditida</taxon>
        <taxon>Rhabditina</taxon>
        <taxon>Rhabditomorpha</taxon>
        <taxon>Rhabditoidea</taxon>
        <taxon>Rhabditidae</taxon>
        <taxon>Peloderinae</taxon>
        <taxon>Caenorhabditis</taxon>
    </lineage>
</organism>